<protein>
    <recommendedName>
        <fullName>Uncharacterized protein BTRF1</fullName>
    </recommendedName>
</protein>
<organismHost>
    <name type="scientific">Homo sapiens</name>
    <name type="common">Human</name>
    <dbReference type="NCBI Taxonomy" id="9606"/>
</organismHost>
<accession>Q1HVD3</accession>
<reference key="1">
    <citation type="journal article" date="2006" name="Virology">
        <title>The genome of Epstein-Barr virus type 2 strain AG876.</title>
        <authorList>
            <person name="Dolan A."/>
            <person name="Addison C."/>
            <person name="Gatherer D."/>
            <person name="Davison A.J."/>
            <person name="McGeoch D.J."/>
        </authorList>
    </citation>
    <scope>NUCLEOTIDE SEQUENCE [LARGE SCALE GENOMIC DNA]</scope>
</reference>
<proteinExistence type="evidence at protein level"/>
<dbReference type="EMBL" id="DQ279927">
    <property type="protein sequence ID" value="ABB89275.1"/>
    <property type="molecule type" value="Genomic_DNA"/>
</dbReference>
<dbReference type="RefSeq" id="YP_001129495.1">
    <property type="nucleotide sequence ID" value="NC_009334.1"/>
</dbReference>
<dbReference type="IntAct" id="Q1HVD3">
    <property type="interactions" value="15"/>
</dbReference>
<dbReference type="MINT" id="Q1HVD3"/>
<dbReference type="KEGG" id="vg:5176214"/>
<dbReference type="Proteomes" id="UP000007639">
    <property type="component" value="Genome"/>
</dbReference>
<dbReference type="InterPro" id="IPR006772">
    <property type="entry name" value="Herpes_BTRF1"/>
</dbReference>
<dbReference type="Pfam" id="PF04682">
    <property type="entry name" value="Herpes_BTRF1"/>
    <property type="match status" value="1"/>
</dbReference>
<comment type="interaction">
    <interactant intactId="EBI-9644838">
        <id>Q1HVD3</id>
    </interactant>
    <interactant intactId="EBI-9644804">
        <id>P03219</id>
        <label>TRM3</label>
    </interactant>
    <organismsDiffer>true</organismsDiffer>
    <experiments>3</experiments>
</comment>
<comment type="similarity">
    <text evidence="1">Belongs to the lymphocryptovirus BTRF1 family.</text>
</comment>
<keyword id="KW-1185">Reference proteome</keyword>
<feature type="chain" id="PRO_0000382445" description="Uncharacterized protein BTRF1">
    <location>
        <begin position="1"/>
        <end position="404"/>
    </location>
</feature>
<organism>
    <name type="scientific">Epstein-Barr virus (strain AG876)</name>
    <name type="common">HHV-4</name>
    <name type="synonym">Human herpesvirus 4</name>
    <dbReference type="NCBI Taxonomy" id="82830"/>
    <lineage>
        <taxon>Viruses</taxon>
        <taxon>Duplodnaviria</taxon>
        <taxon>Heunggongvirae</taxon>
        <taxon>Peploviricota</taxon>
        <taxon>Herviviricetes</taxon>
        <taxon>Herpesvirales</taxon>
        <taxon>Orthoherpesviridae</taxon>
        <taxon>Gammaherpesvirinae</taxon>
        <taxon>Lymphocryptovirus</taxon>
        <taxon>Lymphocryptovirus humangamma4</taxon>
        <taxon>Epstein-Barr virus (strain GD1)</taxon>
    </lineage>
</organism>
<sequence length="404" mass="44314">MLKCKQPGARFIHGAVHLPSGQIVFHTIHSPTLASALGLPGENVPIPALFRASGLNVRESLPMTNMRAPIISLARLILAPNPYILEGQLTVGMTQDNGIPVLFARPVIEVKSGPESNIKASSQLMIAEDSCLNQIAPFSASEHPAFSMVESVKRVRVDEGANTRRTIRDILEIPVTVLSSLQLSPTKSILKKAPEPPPPEPQATFDAAPYARIFYDIGRQVPKLGNAPAAQVSNVLIANRSHNSLRLVPNPDLLPLQHLYLKHVVLKSLNLENIVQDFEAIFTSPSDTISEAETKAFEKLVEQAKNTVENIVFCLNSICSTSTLPDVVPDVNNPNISLALEKYFLMFPPSGTIMRNVRFATPIVRLLCQGAELGTMAQFLGKYIKVKKETGMYTLVKLYYLLRI</sequence>
<gene>
    <name type="ORF">BTRF1</name>
</gene>
<name>BTRF1_EBVA8</name>
<evidence type="ECO:0000305" key="1"/>